<proteinExistence type="inferred from homology"/>
<comment type="catalytic activity">
    <reaction evidence="1">
        <text>D-tagatofuranose 6-phosphate + ATP = D-tagatofuranose 1,6-bisphosphate + ADP + H(+)</text>
        <dbReference type="Rhea" id="RHEA:12420"/>
        <dbReference type="ChEBI" id="CHEBI:15378"/>
        <dbReference type="ChEBI" id="CHEBI:30616"/>
        <dbReference type="ChEBI" id="CHEBI:58694"/>
        <dbReference type="ChEBI" id="CHEBI:58695"/>
        <dbReference type="ChEBI" id="CHEBI:456216"/>
        <dbReference type="EC" id="2.7.1.144"/>
    </reaction>
</comment>
<comment type="pathway">
    <text evidence="1">Carbohydrate metabolism; D-tagatose 6-phosphate degradation; D-glyceraldehyde 3-phosphate and glycerone phosphate from D-tagatose 6-phosphate: step 1/2.</text>
</comment>
<comment type="similarity">
    <text evidence="1">Belongs to the carbohydrate kinase PfkB family. LacC subfamily.</text>
</comment>
<protein>
    <recommendedName>
        <fullName evidence="1">Tagatose-6-phosphate kinase</fullName>
        <ecNumber evidence="1">2.7.1.144</ecNumber>
    </recommendedName>
    <alternativeName>
        <fullName evidence="1">Phosphotagatokinase</fullName>
    </alternativeName>
</protein>
<evidence type="ECO:0000255" key="1">
    <source>
        <dbReference type="HAMAP-Rule" id="MF_01557"/>
    </source>
</evidence>
<keyword id="KW-0067">ATP-binding</keyword>
<keyword id="KW-0418">Kinase</keyword>
<keyword id="KW-0423">Lactose metabolism</keyword>
<keyword id="KW-0547">Nucleotide-binding</keyword>
<keyword id="KW-0808">Transferase</keyword>
<sequence length="309" mass="33495">MILTVTLNPAIDVSYPLDELKCDTVNRVVDVTKTPGGKGLNVSRVLNDFGETVKATGCVGGESGDFIINHLPDSILSRFYKISGDTRTCIAILHEGNQTEILEKGPLLSVDEIDGFTHQFKYLLNDVDVVTMSGSLPAGMPDDYYQKLIKIANLNGKKTVLDCSGNALEAVLKGDSKPTVIKPNLEELSQLLGKEMTKDFEALKEVLQDELFEGIEWIIVSLGADGVFAKHKDTFYNVDIPKIKIVSAVGSGDSTVAGIASGLANDEDDRALLTKANVLGMLNAQEKTTGHVNMANYDKLYQSIKVKEV</sequence>
<name>LACC_STRPB</name>
<dbReference type="EC" id="2.7.1.144" evidence="1"/>
<dbReference type="EMBL" id="CP000261">
    <property type="protein sequence ID" value="ABF36713.1"/>
    <property type="molecule type" value="Genomic_DNA"/>
</dbReference>
<dbReference type="SMR" id="Q1J9U8"/>
<dbReference type="KEGG" id="spj:MGAS2096_Spy1661"/>
<dbReference type="HOGENOM" id="CLU_050013_5_0_9"/>
<dbReference type="UniPathway" id="UPA00704">
    <property type="reaction ID" value="UER00715"/>
</dbReference>
<dbReference type="GO" id="GO:0005829">
    <property type="term" value="C:cytosol"/>
    <property type="evidence" value="ECO:0007669"/>
    <property type="project" value="TreeGrafter"/>
</dbReference>
<dbReference type="GO" id="GO:0005524">
    <property type="term" value="F:ATP binding"/>
    <property type="evidence" value="ECO:0007669"/>
    <property type="project" value="UniProtKB-KW"/>
</dbReference>
<dbReference type="GO" id="GO:0008443">
    <property type="term" value="F:phosphofructokinase activity"/>
    <property type="evidence" value="ECO:0007669"/>
    <property type="project" value="TreeGrafter"/>
</dbReference>
<dbReference type="GO" id="GO:0009024">
    <property type="term" value="F:tagatose-6-phosphate kinase activity"/>
    <property type="evidence" value="ECO:0007669"/>
    <property type="project" value="UniProtKB-UniRule"/>
</dbReference>
<dbReference type="GO" id="GO:2001059">
    <property type="term" value="P:D-tagatose 6-phosphate catabolic process"/>
    <property type="evidence" value="ECO:0007669"/>
    <property type="project" value="UniProtKB-UniRule"/>
</dbReference>
<dbReference type="GO" id="GO:0019512">
    <property type="term" value="P:lactose catabolic process via tagatose-6-phosphate"/>
    <property type="evidence" value="ECO:0007669"/>
    <property type="project" value="InterPro"/>
</dbReference>
<dbReference type="CDD" id="cd01164">
    <property type="entry name" value="FruK_PfkB_like"/>
    <property type="match status" value="1"/>
</dbReference>
<dbReference type="FunFam" id="3.40.1190.20:FF:000001">
    <property type="entry name" value="Phosphofructokinase"/>
    <property type="match status" value="1"/>
</dbReference>
<dbReference type="Gene3D" id="3.40.1190.20">
    <property type="match status" value="1"/>
</dbReference>
<dbReference type="HAMAP" id="MF_01557">
    <property type="entry name" value="LacC"/>
    <property type="match status" value="1"/>
</dbReference>
<dbReference type="InterPro" id="IPR002173">
    <property type="entry name" value="Carboh/pur_kinase_PfkB_CS"/>
</dbReference>
<dbReference type="InterPro" id="IPR005926">
    <property type="entry name" value="LacC"/>
</dbReference>
<dbReference type="InterPro" id="IPR011611">
    <property type="entry name" value="PfkB_dom"/>
</dbReference>
<dbReference type="InterPro" id="IPR029056">
    <property type="entry name" value="Ribokinase-like"/>
</dbReference>
<dbReference type="InterPro" id="IPR017583">
    <property type="entry name" value="Tagatose/fructose_Pkinase"/>
</dbReference>
<dbReference type="NCBIfam" id="TIGR03168">
    <property type="entry name" value="1-PFK"/>
    <property type="match status" value="1"/>
</dbReference>
<dbReference type="NCBIfam" id="TIGR01231">
    <property type="entry name" value="lacC"/>
    <property type="match status" value="1"/>
</dbReference>
<dbReference type="NCBIfam" id="NF010033">
    <property type="entry name" value="PRK13508.1"/>
    <property type="match status" value="1"/>
</dbReference>
<dbReference type="PANTHER" id="PTHR46566:SF5">
    <property type="entry name" value="1-PHOSPHOFRUCTOKINASE"/>
    <property type="match status" value="1"/>
</dbReference>
<dbReference type="PANTHER" id="PTHR46566">
    <property type="entry name" value="1-PHOSPHOFRUCTOKINASE-RELATED"/>
    <property type="match status" value="1"/>
</dbReference>
<dbReference type="Pfam" id="PF00294">
    <property type="entry name" value="PfkB"/>
    <property type="match status" value="1"/>
</dbReference>
<dbReference type="PIRSF" id="PIRSF000535">
    <property type="entry name" value="1PFK/6PFK/LacC"/>
    <property type="match status" value="1"/>
</dbReference>
<dbReference type="SUPFAM" id="SSF53613">
    <property type="entry name" value="Ribokinase-like"/>
    <property type="match status" value="1"/>
</dbReference>
<dbReference type="PROSITE" id="PS00583">
    <property type="entry name" value="PFKB_KINASES_1"/>
    <property type="match status" value="1"/>
</dbReference>
<accession>Q1J9U8</accession>
<organism>
    <name type="scientific">Streptococcus pyogenes serotype M12 (strain MGAS2096)</name>
    <dbReference type="NCBI Taxonomy" id="370553"/>
    <lineage>
        <taxon>Bacteria</taxon>
        <taxon>Bacillati</taxon>
        <taxon>Bacillota</taxon>
        <taxon>Bacilli</taxon>
        <taxon>Lactobacillales</taxon>
        <taxon>Streptococcaceae</taxon>
        <taxon>Streptococcus</taxon>
    </lineage>
</organism>
<feature type="chain" id="PRO_1000068939" description="Tagatose-6-phosphate kinase">
    <location>
        <begin position="1"/>
        <end position="309"/>
    </location>
</feature>
<gene>
    <name evidence="1" type="primary">lacC</name>
    <name type="ordered locus">MGAS2096_Spy1661</name>
</gene>
<reference key="1">
    <citation type="journal article" date="2006" name="Proc. Natl. Acad. Sci. U.S.A.">
        <title>Molecular genetic anatomy of inter- and intraserotype variation in the human bacterial pathogen group A Streptococcus.</title>
        <authorList>
            <person name="Beres S.B."/>
            <person name="Richter E.W."/>
            <person name="Nagiec M.J."/>
            <person name="Sumby P."/>
            <person name="Porcella S.F."/>
            <person name="DeLeo F.R."/>
            <person name="Musser J.M."/>
        </authorList>
    </citation>
    <scope>NUCLEOTIDE SEQUENCE [LARGE SCALE GENOMIC DNA]</scope>
    <source>
        <strain>MGAS2096</strain>
    </source>
</reference>